<accession>Q72CK1</accession>
<organism>
    <name type="scientific">Nitratidesulfovibrio vulgaris (strain ATCC 29579 / DSM 644 / CCUG 34227 / NCIMB 8303 / VKM B-1760 / Hildenborough)</name>
    <name type="common">Desulfovibrio vulgaris</name>
    <dbReference type="NCBI Taxonomy" id="882"/>
    <lineage>
        <taxon>Bacteria</taxon>
        <taxon>Pseudomonadati</taxon>
        <taxon>Thermodesulfobacteriota</taxon>
        <taxon>Desulfovibrionia</taxon>
        <taxon>Desulfovibrionales</taxon>
        <taxon>Desulfovibrionaceae</taxon>
        <taxon>Nitratidesulfovibrio</taxon>
    </lineage>
</organism>
<comment type="function">
    <text evidence="1">Catalyzes the conversion of glucosamine-6-phosphate to glucosamine-1-phosphate.</text>
</comment>
<comment type="catalytic activity">
    <reaction evidence="1">
        <text>alpha-D-glucosamine 1-phosphate = D-glucosamine 6-phosphate</text>
        <dbReference type="Rhea" id="RHEA:23424"/>
        <dbReference type="ChEBI" id="CHEBI:58516"/>
        <dbReference type="ChEBI" id="CHEBI:58725"/>
        <dbReference type="EC" id="5.4.2.10"/>
    </reaction>
</comment>
<comment type="cofactor">
    <cofactor evidence="1">
        <name>Mg(2+)</name>
        <dbReference type="ChEBI" id="CHEBI:18420"/>
    </cofactor>
    <text evidence="1">Binds 1 Mg(2+) ion per subunit.</text>
</comment>
<comment type="PTM">
    <text evidence="1">Activated by phosphorylation.</text>
</comment>
<comment type="similarity">
    <text evidence="1">Belongs to the phosphohexose mutase family.</text>
</comment>
<gene>
    <name evidence="1" type="primary">glmM</name>
    <name type="ordered locus">DVU_1282</name>
</gene>
<evidence type="ECO:0000255" key="1">
    <source>
        <dbReference type="HAMAP-Rule" id="MF_01554"/>
    </source>
</evidence>
<name>GLMM_NITV2</name>
<dbReference type="EC" id="5.4.2.10" evidence="1"/>
<dbReference type="EMBL" id="AE017285">
    <property type="protein sequence ID" value="AAS95760.1"/>
    <property type="molecule type" value="Genomic_DNA"/>
</dbReference>
<dbReference type="RefSeq" id="WP_010938578.1">
    <property type="nucleotide sequence ID" value="NC_002937.3"/>
</dbReference>
<dbReference type="RefSeq" id="YP_010501.1">
    <property type="nucleotide sequence ID" value="NC_002937.3"/>
</dbReference>
<dbReference type="SMR" id="Q72CK1"/>
<dbReference type="IntAct" id="Q72CK1">
    <property type="interactions" value="4"/>
</dbReference>
<dbReference type="STRING" id="882.DVU_1282"/>
<dbReference type="PaxDb" id="882-DVU_1282"/>
<dbReference type="EnsemblBacteria" id="AAS95760">
    <property type="protein sequence ID" value="AAS95760"/>
    <property type="gene ID" value="DVU_1282"/>
</dbReference>
<dbReference type="KEGG" id="dvu:DVU_1282"/>
<dbReference type="PATRIC" id="fig|882.5.peg.1199"/>
<dbReference type="eggNOG" id="COG1109">
    <property type="taxonomic scope" value="Bacteria"/>
</dbReference>
<dbReference type="HOGENOM" id="CLU_016950_7_0_7"/>
<dbReference type="OrthoDB" id="9806956at2"/>
<dbReference type="PhylomeDB" id="Q72CK1"/>
<dbReference type="Proteomes" id="UP000002194">
    <property type="component" value="Chromosome"/>
</dbReference>
<dbReference type="GO" id="GO:0005829">
    <property type="term" value="C:cytosol"/>
    <property type="evidence" value="ECO:0007669"/>
    <property type="project" value="TreeGrafter"/>
</dbReference>
<dbReference type="GO" id="GO:0000287">
    <property type="term" value="F:magnesium ion binding"/>
    <property type="evidence" value="ECO:0007669"/>
    <property type="project" value="UniProtKB-UniRule"/>
</dbReference>
<dbReference type="GO" id="GO:0008966">
    <property type="term" value="F:phosphoglucosamine mutase activity"/>
    <property type="evidence" value="ECO:0007669"/>
    <property type="project" value="UniProtKB-UniRule"/>
</dbReference>
<dbReference type="GO" id="GO:0004615">
    <property type="term" value="F:phosphomannomutase activity"/>
    <property type="evidence" value="ECO:0007669"/>
    <property type="project" value="TreeGrafter"/>
</dbReference>
<dbReference type="GO" id="GO:0005975">
    <property type="term" value="P:carbohydrate metabolic process"/>
    <property type="evidence" value="ECO:0007669"/>
    <property type="project" value="InterPro"/>
</dbReference>
<dbReference type="GO" id="GO:0009252">
    <property type="term" value="P:peptidoglycan biosynthetic process"/>
    <property type="evidence" value="ECO:0007669"/>
    <property type="project" value="TreeGrafter"/>
</dbReference>
<dbReference type="GO" id="GO:0006048">
    <property type="term" value="P:UDP-N-acetylglucosamine biosynthetic process"/>
    <property type="evidence" value="ECO:0007669"/>
    <property type="project" value="TreeGrafter"/>
</dbReference>
<dbReference type="CDD" id="cd05802">
    <property type="entry name" value="GlmM"/>
    <property type="match status" value="1"/>
</dbReference>
<dbReference type="FunFam" id="3.30.310.50:FF:000001">
    <property type="entry name" value="Phosphoglucosamine mutase"/>
    <property type="match status" value="1"/>
</dbReference>
<dbReference type="FunFam" id="3.40.120.10:FF:000001">
    <property type="entry name" value="Phosphoglucosamine mutase"/>
    <property type="match status" value="1"/>
</dbReference>
<dbReference type="FunFam" id="3.40.120.10:FF:000002">
    <property type="entry name" value="Phosphoglucosamine mutase"/>
    <property type="match status" value="1"/>
</dbReference>
<dbReference type="Gene3D" id="3.40.120.10">
    <property type="entry name" value="Alpha-D-Glucose-1,6-Bisphosphate, subunit A, domain 3"/>
    <property type="match status" value="3"/>
</dbReference>
<dbReference type="Gene3D" id="3.30.310.50">
    <property type="entry name" value="Alpha-D-phosphohexomutase, C-terminal domain"/>
    <property type="match status" value="1"/>
</dbReference>
<dbReference type="HAMAP" id="MF_01554_B">
    <property type="entry name" value="GlmM_B"/>
    <property type="match status" value="1"/>
</dbReference>
<dbReference type="InterPro" id="IPR005844">
    <property type="entry name" value="A-D-PHexomutase_a/b/a-I"/>
</dbReference>
<dbReference type="InterPro" id="IPR016055">
    <property type="entry name" value="A-D-PHexomutase_a/b/a-I/II/III"/>
</dbReference>
<dbReference type="InterPro" id="IPR005845">
    <property type="entry name" value="A-D-PHexomutase_a/b/a-II"/>
</dbReference>
<dbReference type="InterPro" id="IPR005846">
    <property type="entry name" value="A-D-PHexomutase_a/b/a-III"/>
</dbReference>
<dbReference type="InterPro" id="IPR005843">
    <property type="entry name" value="A-D-PHexomutase_C"/>
</dbReference>
<dbReference type="InterPro" id="IPR036900">
    <property type="entry name" value="A-D-PHexomutase_C_sf"/>
</dbReference>
<dbReference type="InterPro" id="IPR016066">
    <property type="entry name" value="A-D-PHexomutase_CS"/>
</dbReference>
<dbReference type="InterPro" id="IPR005841">
    <property type="entry name" value="Alpha-D-phosphohexomutase_SF"/>
</dbReference>
<dbReference type="InterPro" id="IPR006352">
    <property type="entry name" value="GlmM_bact"/>
</dbReference>
<dbReference type="InterPro" id="IPR050060">
    <property type="entry name" value="Phosphoglucosamine_mutase"/>
</dbReference>
<dbReference type="NCBIfam" id="TIGR01455">
    <property type="entry name" value="glmM"/>
    <property type="match status" value="1"/>
</dbReference>
<dbReference type="NCBIfam" id="NF008139">
    <property type="entry name" value="PRK10887.1"/>
    <property type="match status" value="1"/>
</dbReference>
<dbReference type="PANTHER" id="PTHR42946:SF1">
    <property type="entry name" value="PHOSPHOGLUCOMUTASE (ALPHA-D-GLUCOSE-1,6-BISPHOSPHATE-DEPENDENT)"/>
    <property type="match status" value="1"/>
</dbReference>
<dbReference type="PANTHER" id="PTHR42946">
    <property type="entry name" value="PHOSPHOHEXOSE MUTASE"/>
    <property type="match status" value="1"/>
</dbReference>
<dbReference type="Pfam" id="PF02878">
    <property type="entry name" value="PGM_PMM_I"/>
    <property type="match status" value="1"/>
</dbReference>
<dbReference type="Pfam" id="PF02879">
    <property type="entry name" value="PGM_PMM_II"/>
    <property type="match status" value="1"/>
</dbReference>
<dbReference type="Pfam" id="PF02880">
    <property type="entry name" value="PGM_PMM_III"/>
    <property type="match status" value="1"/>
</dbReference>
<dbReference type="Pfam" id="PF00408">
    <property type="entry name" value="PGM_PMM_IV"/>
    <property type="match status" value="1"/>
</dbReference>
<dbReference type="PRINTS" id="PR00509">
    <property type="entry name" value="PGMPMM"/>
</dbReference>
<dbReference type="SUPFAM" id="SSF55957">
    <property type="entry name" value="Phosphoglucomutase, C-terminal domain"/>
    <property type="match status" value="1"/>
</dbReference>
<dbReference type="SUPFAM" id="SSF53738">
    <property type="entry name" value="Phosphoglucomutase, first 3 domains"/>
    <property type="match status" value="3"/>
</dbReference>
<dbReference type="PROSITE" id="PS00710">
    <property type="entry name" value="PGM_PMM"/>
    <property type="match status" value="1"/>
</dbReference>
<proteinExistence type="inferred from homology"/>
<reference key="1">
    <citation type="journal article" date="2004" name="Nat. Biotechnol.">
        <title>The genome sequence of the anaerobic, sulfate-reducing bacterium Desulfovibrio vulgaris Hildenborough.</title>
        <authorList>
            <person name="Heidelberg J.F."/>
            <person name="Seshadri R."/>
            <person name="Haveman S.A."/>
            <person name="Hemme C.L."/>
            <person name="Paulsen I.T."/>
            <person name="Kolonay J.F."/>
            <person name="Eisen J.A."/>
            <person name="Ward N.L."/>
            <person name="Methe B.A."/>
            <person name="Brinkac L.M."/>
            <person name="Daugherty S.C."/>
            <person name="DeBoy R.T."/>
            <person name="Dodson R.J."/>
            <person name="Durkin A.S."/>
            <person name="Madupu R."/>
            <person name="Nelson W.C."/>
            <person name="Sullivan S.A."/>
            <person name="Fouts D.E."/>
            <person name="Haft D.H."/>
            <person name="Selengut J."/>
            <person name="Peterson J.D."/>
            <person name="Davidsen T.M."/>
            <person name="Zafar N."/>
            <person name="Zhou L."/>
            <person name="Radune D."/>
            <person name="Dimitrov G."/>
            <person name="Hance M."/>
            <person name="Tran K."/>
            <person name="Khouri H.M."/>
            <person name="Gill J."/>
            <person name="Utterback T.R."/>
            <person name="Feldblyum T.V."/>
            <person name="Wall J.D."/>
            <person name="Voordouw G."/>
            <person name="Fraser C.M."/>
        </authorList>
    </citation>
    <scope>NUCLEOTIDE SEQUENCE [LARGE SCALE GENOMIC DNA]</scope>
    <source>
        <strain>ATCC 29579 / DSM 644 / CCUG 34227 / NCIMB 8303 / VKM B-1760 / Hildenborough</strain>
    </source>
</reference>
<protein>
    <recommendedName>
        <fullName evidence="1">Phosphoglucosamine mutase</fullName>
        <ecNumber evidence="1">5.4.2.10</ecNumber>
    </recommendedName>
</protein>
<feature type="chain" id="PRO_0000147885" description="Phosphoglucosamine mutase">
    <location>
        <begin position="1"/>
        <end position="450"/>
    </location>
</feature>
<feature type="active site" description="Phosphoserine intermediate" evidence="1">
    <location>
        <position position="102"/>
    </location>
</feature>
<feature type="binding site" description="via phosphate group" evidence="1">
    <location>
        <position position="102"/>
    </location>
    <ligand>
        <name>Mg(2+)</name>
        <dbReference type="ChEBI" id="CHEBI:18420"/>
    </ligand>
</feature>
<feature type="binding site" evidence="1">
    <location>
        <position position="244"/>
    </location>
    <ligand>
        <name>Mg(2+)</name>
        <dbReference type="ChEBI" id="CHEBI:18420"/>
    </ligand>
</feature>
<feature type="binding site" evidence="1">
    <location>
        <position position="246"/>
    </location>
    <ligand>
        <name>Mg(2+)</name>
        <dbReference type="ChEBI" id="CHEBI:18420"/>
    </ligand>
</feature>
<feature type="binding site" evidence="1">
    <location>
        <position position="248"/>
    </location>
    <ligand>
        <name>Mg(2+)</name>
        <dbReference type="ChEBI" id="CHEBI:18420"/>
    </ligand>
</feature>
<feature type="modified residue" description="Phosphoserine" evidence="1">
    <location>
        <position position="102"/>
    </location>
</feature>
<sequence length="450" mass="49196">MGRRLFGTDGLRGQVNIYPMTADMALRLGLAAGTRFRNGNRRHRVVIGKDTRLSGYMFESALTAGLCAAGMDVFQVGPLPTPAISFLTRNMRADLGVVISASHNPFMDNGIKFFDRSGFKLPDDVENQMTDMVLDPDWQWDYPASEKVGRAYKIADAPGRYIVYIKSSFPADLTLDGLRVVIDCANGANYKVAPLALEELGAEVIKLGTEPNGLNINHQCGSLYPEVVAAKVRETRADIGLALDGDADRLIVVDEKGTILDGDQIMALCAQDLMAKGKLPGNMLVATVMSNMALEVFMKEHGGTLLRTAVGDRYVVEAMRQHGALLGGEQSGHLIFREYSTTGDGLLAALQILRIMRERGKPLSELAGQLQLFPQQLINVHVERKIPFAECQPVADAVAAIETELGDRGRVLLRYSGTESVCRVMVEGEHPEQVARLAEMLAETVQKHLR</sequence>
<keyword id="KW-0413">Isomerase</keyword>
<keyword id="KW-0460">Magnesium</keyword>
<keyword id="KW-0479">Metal-binding</keyword>
<keyword id="KW-0597">Phosphoprotein</keyword>
<keyword id="KW-1185">Reference proteome</keyword>